<sequence>MEIKPITIYTGKTVPLFYDNIDTDQIIPKVHLKRVSKSGFGPFAFDEWRYLPDGSDNPDFNPNKPKYHGASILITGDNFGCGSSREHAAWALKDYGFNIIIAGSFSDIFYMNCTKNAMLPICLNQKEREHLAQFDEITVDLPNQTVSTVSQSFHFDIDETWKNKLIHGLDDIAITLQFENLIEKYEKTF</sequence>
<organism>
    <name type="scientific">Staphylococcus epidermidis (strain ATCC 35984 / DSM 28319 / BCRC 17069 / CCUG 31568 / BM 3577 / RP62A)</name>
    <dbReference type="NCBI Taxonomy" id="176279"/>
    <lineage>
        <taxon>Bacteria</taxon>
        <taxon>Bacillati</taxon>
        <taxon>Bacillota</taxon>
        <taxon>Bacilli</taxon>
        <taxon>Bacillales</taxon>
        <taxon>Staphylococcaceae</taxon>
        <taxon>Staphylococcus</taxon>
    </lineage>
</organism>
<name>LEUD_STAEQ</name>
<reference key="1">
    <citation type="journal article" date="2005" name="J. Bacteriol.">
        <title>Insights on evolution of virulence and resistance from the complete genome analysis of an early methicillin-resistant Staphylococcus aureus strain and a biofilm-producing methicillin-resistant Staphylococcus epidermidis strain.</title>
        <authorList>
            <person name="Gill S.R."/>
            <person name="Fouts D.E."/>
            <person name="Archer G.L."/>
            <person name="Mongodin E.F."/>
            <person name="DeBoy R.T."/>
            <person name="Ravel J."/>
            <person name="Paulsen I.T."/>
            <person name="Kolonay J.F."/>
            <person name="Brinkac L.M."/>
            <person name="Beanan M.J."/>
            <person name="Dodson R.J."/>
            <person name="Daugherty S.C."/>
            <person name="Madupu R."/>
            <person name="Angiuoli S.V."/>
            <person name="Durkin A.S."/>
            <person name="Haft D.H."/>
            <person name="Vamathevan J.J."/>
            <person name="Khouri H."/>
            <person name="Utterback T.R."/>
            <person name="Lee C."/>
            <person name="Dimitrov G."/>
            <person name="Jiang L."/>
            <person name="Qin H."/>
            <person name="Weidman J."/>
            <person name="Tran K."/>
            <person name="Kang K.H."/>
            <person name="Hance I.R."/>
            <person name="Nelson K.E."/>
            <person name="Fraser C.M."/>
        </authorList>
    </citation>
    <scope>NUCLEOTIDE SEQUENCE [LARGE SCALE GENOMIC DNA]</scope>
    <source>
        <strain>ATCC 35984 / DSM 28319 / BCRC 17069 / CCUG 31568 / BM 3577 / RP62A</strain>
    </source>
</reference>
<accession>Q5HMF6</accession>
<protein>
    <recommendedName>
        <fullName evidence="1">3-isopropylmalate dehydratase small subunit</fullName>
        <ecNumber evidence="1">4.2.1.33</ecNumber>
    </recommendedName>
    <alternativeName>
        <fullName evidence="1">Alpha-IPM isomerase</fullName>
        <shortName evidence="1">IPMI</shortName>
    </alternativeName>
    <alternativeName>
        <fullName evidence="1">Isopropylmalate isomerase</fullName>
    </alternativeName>
</protein>
<keyword id="KW-0028">Amino-acid biosynthesis</keyword>
<keyword id="KW-0100">Branched-chain amino acid biosynthesis</keyword>
<keyword id="KW-0432">Leucine biosynthesis</keyword>
<keyword id="KW-0456">Lyase</keyword>
<keyword id="KW-1185">Reference proteome</keyword>
<gene>
    <name evidence="1" type="primary">leuD</name>
    <name type="ordered locus">SERP1672</name>
</gene>
<proteinExistence type="inferred from homology"/>
<feature type="chain" id="PRO_0000141889" description="3-isopropylmalate dehydratase small subunit">
    <location>
        <begin position="1"/>
        <end position="189"/>
    </location>
</feature>
<evidence type="ECO:0000255" key="1">
    <source>
        <dbReference type="HAMAP-Rule" id="MF_01031"/>
    </source>
</evidence>
<dbReference type="EC" id="4.2.1.33" evidence="1"/>
<dbReference type="EMBL" id="CP000029">
    <property type="protein sequence ID" value="AAW55019.1"/>
    <property type="molecule type" value="Genomic_DNA"/>
</dbReference>
<dbReference type="RefSeq" id="WP_002457053.1">
    <property type="nucleotide sequence ID" value="NC_002976.3"/>
</dbReference>
<dbReference type="SMR" id="Q5HMF6"/>
<dbReference type="STRING" id="176279.SERP1672"/>
<dbReference type="GeneID" id="50018240"/>
<dbReference type="KEGG" id="ser:SERP1672"/>
<dbReference type="eggNOG" id="COG0066">
    <property type="taxonomic scope" value="Bacteria"/>
</dbReference>
<dbReference type="HOGENOM" id="CLU_081378_0_3_9"/>
<dbReference type="UniPathway" id="UPA00048">
    <property type="reaction ID" value="UER00071"/>
</dbReference>
<dbReference type="Proteomes" id="UP000000531">
    <property type="component" value="Chromosome"/>
</dbReference>
<dbReference type="GO" id="GO:0009316">
    <property type="term" value="C:3-isopropylmalate dehydratase complex"/>
    <property type="evidence" value="ECO:0007669"/>
    <property type="project" value="InterPro"/>
</dbReference>
<dbReference type="GO" id="GO:0003861">
    <property type="term" value="F:3-isopropylmalate dehydratase activity"/>
    <property type="evidence" value="ECO:0007669"/>
    <property type="project" value="UniProtKB-UniRule"/>
</dbReference>
<dbReference type="GO" id="GO:0009098">
    <property type="term" value="P:L-leucine biosynthetic process"/>
    <property type="evidence" value="ECO:0007669"/>
    <property type="project" value="UniProtKB-UniRule"/>
</dbReference>
<dbReference type="CDD" id="cd01577">
    <property type="entry name" value="IPMI_Swivel"/>
    <property type="match status" value="1"/>
</dbReference>
<dbReference type="FunFam" id="3.20.19.10:FF:000003">
    <property type="entry name" value="3-isopropylmalate dehydratase small subunit"/>
    <property type="match status" value="1"/>
</dbReference>
<dbReference type="Gene3D" id="3.20.19.10">
    <property type="entry name" value="Aconitase, domain 4"/>
    <property type="match status" value="1"/>
</dbReference>
<dbReference type="HAMAP" id="MF_01031">
    <property type="entry name" value="LeuD_type1"/>
    <property type="match status" value="1"/>
</dbReference>
<dbReference type="InterPro" id="IPR004431">
    <property type="entry name" value="3-IsopropMal_deHydase_ssu"/>
</dbReference>
<dbReference type="InterPro" id="IPR015928">
    <property type="entry name" value="Aconitase/3IPM_dehydase_swvl"/>
</dbReference>
<dbReference type="InterPro" id="IPR000573">
    <property type="entry name" value="AconitaseA/IPMdHydase_ssu_swvl"/>
</dbReference>
<dbReference type="InterPro" id="IPR033940">
    <property type="entry name" value="IPMI_Swivel"/>
</dbReference>
<dbReference type="InterPro" id="IPR050075">
    <property type="entry name" value="LeuD"/>
</dbReference>
<dbReference type="NCBIfam" id="TIGR00171">
    <property type="entry name" value="leuD"/>
    <property type="match status" value="1"/>
</dbReference>
<dbReference type="NCBIfam" id="NF002458">
    <property type="entry name" value="PRK01641.1"/>
    <property type="match status" value="1"/>
</dbReference>
<dbReference type="PANTHER" id="PTHR43345:SF5">
    <property type="entry name" value="3-ISOPROPYLMALATE DEHYDRATASE SMALL SUBUNIT"/>
    <property type="match status" value="1"/>
</dbReference>
<dbReference type="PANTHER" id="PTHR43345">
    <property type="entry name" value="3-ISOPROPYLMALATE DEHYDRATASE SMALL SUBUNIT 2-RELATED-RELATED"/>
    <property type="match status" value="1"/>
</dbReference>
<dbReference type="Pfam" id="PF00694">
    <property type="entry name" value="Aconitase_C"/>
    <property type="match status" value="1"/>
</dbReference>
<dbReference type="SUPFAM" id="SSF52016">
    <property type="entry name" value="LeuD/IlvD-like"/>
    <property type="match status" value="1"/>
</dbReference>
<comment type="function">
    <text evidence="1">Catalyzes the isomerization between 2-isopropylmalate and 3-isopropylmalate, via the formation of 2-isopropylmaleate.</text>
</comment>
<comment type="catalytic activity">
    <reaction evidence="1">
        <text>(2R,3S)-3-isopropylmalate = (2S)-2-isopropylmalate</text>
        <dbReference type="Rhea" id="RHEA:32287"/>
        <dbReference type="ChEBI" id="CHEBI:1178"/>
        <dbReference type="ChEBI" id="CHEBI:35121"/>
        <dbReference type="EC" id="4.2.1.33"/>
    </reaction>
</comment>
<comment type="pathway">
    <text evidence="1">Amino-acid biosynthesis; L-leucine biosynthesis; L-leucine from 3-methyl-2-oxobutanoate: step 2/4.</text>
</comment>
<comment type="subunit">
    <text evidence="1">Heterodimer of LeuC and LeuD.</text>
</comment>
<comment type="similarity">
    <text evidence="1">Belongs to the LeuD family. LeuD type 1 subfamily.</text>
</comment>